<dbReference type="EC" id="5.4.99.25" evidence="1"/>
<dbReference type="EMBL" id="AL646052">
    <property type="protein sequence ID" value="CAD14993.1"/>
    <property type="molecule type" value="Genomic_DNA"/>
</dbReference>
<dbReference type="RefSeq" id="WP_011001240.1">
    <property type="nucleotide sequence ID" value="NC_003295.1"/>
</dbReference>
<dbReference type="SMR" id="Q8XZV4"/>
<dbReference type="STRING" id="267608.RSc1291"/>
<dbReference type="EnsemblBacteria" id="CAD14993">
    <property type="protein sequence ID" value="CAD14993"/>
    <property type="gene ID" value="RSc1291"/>
</dbReference>
<dbReference type="KEGG" id="rso:RSc1291"/>
<dbReference type="eggNOG" id="COG0130">
    <property type="taxonomic scope" value="Bacteria"/>
</dbReference>
<dbReference type="HOGENOM" id="CLU_032087_0_3_4"/>
<dbReference type="Proteomes" id="UP000001436">
    <property type="component" value="Chromosome"/>
</dbReference>
<dbReference type="GO" id="GO:0003723">
    <property type="term" value="F:RNA binding"/>
    <property type="evidence" value="ECO:0007669"/>
    <property type="project" value="InterPro"/>
</dbReference>
<dbReference type="GO" id="GO:0160148">
    <property type="term" value="F:tRNA pseudouridine(55) synthase activity"/>
    <property type="evidence" value="ECO:0007669"/>
    <property type="project" value="UniProtKB-EC"/>
</dbReference>
<dbReference type="GO" id="GO:1990481">
    <property type="term" value="P:mRNA pseudouridine synthesis"/>
    <property type="evidence" value="ECO:0007669"/>
    <property type="project" value="TreeGrafter"/>
</dbReference>
<dbReference type="GO" id="GO:0031119">
    <property type="term" value="P:tRNA pseudouridine synthesis"/>
    <property type="evidence" value="ECO:0007669"/>
    <property type="project" value="UniProtKB-UniRule"/>
</dbReference>
<dbReference type="CDD" id="cd02573">
    <property type="entry name" value="PseudoU_synth_EcTruB"/>
    <property type="match status" value="1"/>
</dbReference>
<dbReference type="CDD" id="cd21152">
    <property type="entry name" value="PUA_TruB_bacterial"/>
    <property type="match status" value="1"/>
</dbReference>
<dbReference type="FunFam" id="3.30.2350.10:FF:000011">
    <property type="entry name" value="tRNA pseudouridine synthase B"/>
    <property type="match status" value="1"/>
</dbReference>
<dbReference type="Gene3D" id="3.30.2350.10">
    <property type="entry name" value="Pseudouridine synthase"/>
    <property type="match status" value="1"/>
</dbReference>
<dbReference type="Gene3D" id="2.30.130.10">
    <property type="entry name" value="PUA domain"/>
    <property type="match status" value="1"/>
</dbReference>
<dbReference type="HAMAP" id="MF_01080">
    <property type="entry name" value="TruB_bact"/>
    <property type="match status" value="1"/>
</dbReference>
<dbReference type="InterPro" id="IPR020103">
    <property type="entry name" value="PsdUridine_synth_cat_dom_sf"/>
</dbReference>
<dbReference type="InterPro" id="IPR002501">
    <property type="entry name" value="PsdUridine_synth_N"/>
</dbReference>
<dbReference type="InterPro" id="IPR015947">
    <property type="entry name" value="PUA-like_sf"/>
</dbReference>
<dbReference type="InterPro" id="IPR036974">
    <property type="entry name" value="PUA_sf"/>
</dbReference>
<dbReference type="InterPro" id="IPR014780">
    <property type="entry name" value="tRNA_psdUridine_synth_TruB"/>
</dbReference>
<dbReference type="InterPro" id="IPR015240">
    <property type="entry name" value="tRNA_sdUridine_synth_fam1_C"/>
</dbReference>
<dbReference type="InterPro" id="IPR032819">
    <property type="entry name" value="TruB_C"/>
</dbReference>
<dbReference type="NCBIfam" id="TIGR00431">
    <property type="entry name" value="TruB"/>
    <property type="match status" value="1"/>
</dbReference>
<dbReference type="PANTHER" id="PTHR13767:SF2">
    <property type="entry name" value="PSEUDOURIDYLATE SYNTHASE TRUB1"/>
    <property type="match status" value="1"/>
</dbReference>
<dbReference type="PANTHER" id="PTHR13767">
    <property type="entry name" value="TRNA-PSEUDOURIDINE SYNTHASE"/>
    <property type="match status" value="1"/>
</dbReference>
<dbReference type="Pfam" id="PF09157">
    <property type="entry name" value="TruB-C_2"/>
    <property type="match status" value="1"/>
</dbReference>
<dbReference type="Pfam" id="PF16198">
    <property type="entry name" value="TruB_C_2"/>
    <property type="match status" value="1"/>
</dbReference>
<dbReference type="Pfam" id="PF01509">
    <property type="entry name" value="TruB_N"/>
    <property type="match status" value="1"/>
</dbReference>
<dbReference type="SUPFAM" id="SSF55120">
    <property type="entry name" value="Pseudouridine synthase"/>
    <property type="match status" value="1"/>
</dbReference>
<dbReference type="SUPFAM" id="SSF88697">
    <property type="entry name" value="PUA domain-like"/>
    <property type="match status" value="1"/>
</dbReference>
<gene>
    <name evidence="1" type="primary">truB</name>
    <name type="ordered locus">RSc1291</name>
    <name type="ORF">RS02804</name>
</gene>
<name>TRUB_RALN1</name>
<comment type="function">
    <text evidence="1">Responsible for synthesis of pseudouridine from uracil-55 in the psi GC loop of transfer RNAs.</text>
</comment>
<comment type="catalytic activity">
    <reaction evidence="1">
        <text>uridine(55) in tRNA = pseudouridine(55) in tRNA</text>
        <dbReference type="Rhea" id="RHEA:42532"/>
        <dbReference type="Rhea" id="RHEA-COMP:10101"/>
        <dbReference type="Rhea" id="RHEA-COMP:10102"/>
        <dbReference type="ChEBI" id="CHEBI:65314"/>
        <dbReference type="ChEBI" id="CHEBI:65315"/>
        <dbReference type="EC" id="5.4.99.25"/>
    </reaction>
</comment>
<comment type="similarity">
    <text evidence="1">Belongs to the pseudouridine synthase TruB family. Type 1 subfamily.</text>
</comment>
<reference key="1">
    <citation type="journal article" date="2002" name="Nature">
        <title>Genome sequence of the plant pathogen Ralstonia solanacearum.</title>
        <authorList>
            <person name="Salanoubat M."/>
            <person name="Genin S."/>
            <person name="Artiguenave F."/>
            <person name="Gouzy J."/>
            <person name="Mangenot S."/>
            <person name="Arlat M."/>
            <person name="Billault A."/>
            <person name="Brottier P."/>
            <person name="Camus J.-C."/>
            <person name="Cattolico L."/>
            <person name="Chandler M."/>
            <person name="Choisne N."/>
            <person name="Claudel-Renard C."/>
            <person name="Cunnac S."/>
            <person name="Demange N."/>
            <person name="Gaspin C."/>
            <person name="Lavie M."/>
            <person name="Moisan A."/>
            <person name="Robert C."/>
            <person name="Saurin W."/>
            <person name="Schiex T."/>
            <person name="Siguier P."/>
            <person name="Thebault P."/>
            <person name="Whalen M."/>
            <person name="Wincker P."/>
            <person name="Levy M."/>
            <person name="Weissenbach J."/>
            <person name="Boucher C.A."/>
        </authorList>
    </citation>
    <scope>NUCLEOTIDE SEQUENCE [LARGE SCALE GENOMIC DNA]</scope>
    <source>
        <strain>ATCC BAA-1114 / GMI1000</strain>
    </source>
</reference>
<accession>Q8XZV4</accession>
<organism>
    <name type="scientific">Ralstonia nicotianae (strain ATCC BAA-1114 / GMI1000)</name>
    <name type="common">Ralstonia solanacearum</name>
    <dbReference type="NCBI Taxonomy" id="267608"/>
    <lineage>
        <taxon>Bacteria</taxon>
        <taxon>Pseudomonadati</taxon>
        <taxon>Pseudomonadota</taxon>
        <taxon>Betaproteobacteria</taxon>
        <taxon>Burkholderiales</taxon>
        <taxon>Burkholderiaceae</taxon>
        <taxon>Ralstonia</taxon>
        <taxon>Ralstonia solanacearum species complex</taxon>
    </lineage>
</organism>
<sequence>MTEQRPSQQAKQPRRDVHGVLLLDKPIGWSSNDALIRAKRLLWAKKAGHTGTLDPLATGLLPLCFGEATKFSQDLLEADKTYEAVVRLGIRTSTADAEGEVLSERPVAVTPEQLRAAIGRFVGEIDQVPPMHSALKKDGKPLYEYARAGQTVERAARRVTIRAIDVLATDLDAAAPTVTLRVCCSKGTYIRTLGEDLGEALGCGAHLVALRRTQVGSLTLDGAVTLEALEAASEDQRAALLAPVDALLQTLPRVELGAEDSRRFLHGQRLPLQLSLPSAEQVRVYGARGEAGASLLGVAAWQGGVLRPERLVHL</sequence>
<evidence type="ECO:0000255" key="1">
    <source>
        <dbReference type="HAMAP-Rule" id="MF_01080"/>
    </source>
</evidence>
<keyword id="KW-0413">Isomerase</keyword>
<keyword id="KW-1185">Reference proteome</keyword>
<keyword id="KW-0819">tRNA processing</keyword>
<protein>
    <recommendedName>
        <fullName evidence="1">tRNA pseudouridine synthase B</fullName>
        <ecNumber evidence="1">5.4.99.25</ecNumber>
    </recommendedName>
    <alternativeName>
        <fullName evidence="1">tRNA pseudouridine(55) synthase</fullName>
        <shortName evidence="1">Psi55 synthase</shortName>
    </alternativeName>
    <alternativeName>
        <fullName evidence="1">tRNA pseudouridylate synthase</fullName>
    </alternativeName>
    <alternativeName>
        <fullName evidence="1">tRNA-uridine isomerase</fullName>
    </alternativeName>
</protein>
<proteinExistence type="inferred from homology"/>
<feature type="chain" id="PRO_0000121889" description="tRNA pseudouridine synthase B">
    <location>
        <begin position="1"/>
        <end position="314"/>
    </location>
</feature>
<feature type="active site" description="Nucleophile" evidence="1">
    <location>
        <position position="54"/>
    </location>
</feature>